<name>RLMH_SACD2</name>
<keyword id="KW-0963">Cytoplasm</keyword>
<keyword id="KW-0489">Methyltransferase</keyword>
<keyword id="KW-1185">Reference proteome</keyword>
<keyword id="KW-0698">rRNA processing</keyword>
<keyword id="KW-0949">S-adenosyl-L-methionine</keyword>
<keyword id="KW-0808">Transferase</keyword>
<organism>
    <name type="scientific">Saccharophagus degradans (strain 2-40 / ATCC 43961 / DSM 17024)</name>
    <dbReference type="NCBI Taxonomy" id="203122"/>
    <lineage>
        <taxon>Bacteria</taxon>
        <taxon>Pseudomonadati</taxon>
        <taxon>Pseudomonadota</taxon>
        <taxon>Gammaproteobacteria</taxon>
        <taxon>Cellvibrionales</taxon>
        <taxon>Cellvibrionaceae</taxon>
        <taxon>Saccharophagus</taxon>
    </lineage>
</organism>
<reference key="1">
    <citation type="journal article" date="2008" name="PLoS Genet.">
        <title>Complete genome sequence of the complex carbohydrate-degrading marine bacterium, Saccharophagus degradans strain 2-40 T.</title>
        <authorList>
            <person name="Weiner R.M."/>
            <person name="Taylor L.E. II"/>
            <person name="Henrissat B."/>
            <person name="Hauser L."/>
            <person name="Land M."/>
            <person name="Coutinho P.M."/>
            <person name="Rancurel C."/>
            <person name="Saunders E.H."/>
            <person name="Longmire A.G."/>
            <person name="Zhang H."/>
            <person name="Bayer E.A."/>
            <person name="Gilbert H.J."/>
            <person name="Larimer F."/>
            <person name="Zhulin I.B."/>
            <person name="Ekborg N.A."/>
            <person name="Lamed R."/>
            <person name="Richardson P.M."/>
            <person name="Borovok I."/>
            <person name="Hutcheson S."/>
        </authorList>
    </citation>
    <scope>NUCLEOTIDE SEQUENCE [LARGE SCALE GENOMIC DNA]</scope>
    <source>
        <strain>2-40 / ATCC 43961 / DSM 17024</strain>
    </source>
</reference>
<protein>
    <recommendedName>
        <fullName evidence="1">Ribosomal RNA large subunit methyltransferase H</fullName>
        <ecNumber evidence="1">2.1.1.177</ecNumber>
    </recommendedName>
    <alternativeName>
        <fullName evidence="1">23S rRNA (pseudouridine1915-N3)-methyltransferase</fullName>
    </alternativeName>
    <alternativeName>
        <fullName evidence="1">23S rRNA m3Psi1915 methyltransferase</fullName>
    </alternativeName>
    <alternativeName>
        <fullName evidence="1">rRNA (pseudouridine-N3-)-methyltransferase RlmH</fullName>
    </alternativeName>
</protein>
<accession>Q21FD2</accession>
<feature type="chain" id="PRO_0000260603" description="Ribosomal RNA large subunit methyltransferase H">
    <location>
        <begin position="1"/>
        <end position="155"/>
    </location>
</feature>
<feature type="binding site" evidence="1">
    <location>
        <position position="73"/>
    </location>
    <ligand>
        <name>S-adenosyl-L-methionine</name>
        <dbReference type="ChEBI" id="CHEBI:59789"/>
    </ligand>
</feature>
<feature type="binding site" evidence="1">
    <location>
        <position position="104"/>
    </location>
    <ligand>
        <name>S-adenosyl-L-methionine</name>
        <dbReference type="ChEBI" id="CHEBI:59789"/>
    </ligand>
</feature>
<feature type="binding site" evidence="1">
    <location>
        <begin position="123"/>
        <end position="128"/>
    </location>
    <ligand>
        <name>S-adenosyl-L-methionine</name>
        <dbReference type="ChEBI" id="CHEBI:59789"/>
    </ligand>
</feature>
<sequence length="155" mass="17331">MKISLIAVGTRMPAWVQDGYQEYAKRLPKELTPELVELPLAVRSKSTNTQNAIASEGDNMLKHIGSNTRTIALDVLGKSFSTEVLSQKLADWQMDGRNVNILIGGPDGLDSRCLAQADEKWSLSALTLPHPLVRVLLIEQLYRAWTILQNHPYHK</sequence>
<gene>
    <name evidence="1" type="primary">rlmH</name>
    <name type="ordered locus">Sde_3342</name>
</gene>
<evidence type="ECO:0000255" key="1">
    <source>
        <dbReference type="HAMAP-Rule" id="MF_00658"/>
    </source>
</evidence>
<dbReference type="EC" id="2.1.1.177" evidence="1"/>
<dbReference type="EMBL" id="CP000282">
    <property type="protein sequence ID" value="ABD82597.1"/>
    <property type="molecule type" value="Genomic_DNA"/>
</dbReference>
<dbReference type="RefSeq" id="WP_011469813.1">
    <property type="nucleotide sequence ID" value="NC_007912.1"/>
</dbReference>
<dbReference type="SMR" id="Q21FD2"/>
<dbReference type="STRING" id="203122.Sde_3342"/>
<dbReference type="GeneID" id="98614962"/>
<dbReference type="KEGG" id="sde:Sde_3342"/>
<dbReference type="eggNOG" id="COG1576">
    <property type="taxonomic scope" value="Bacteria"/>
</dbReference>
<dbReference type="HOGENOM" id="CLU_100552_1_0_6"/>
<dbReference type="OrthoDB" id="9806643at2"/>
<dbReference type="Proteomes" id="UP000001947">
    <property type="component" value="Chromosome"/>
</dbReference>
<dbReference type="GO" id="GO:0005737">
    <property type="term" value="C:cytoplasm"/>
    <property type="evidence" value="ECO:0007669"/>
    <property type="project" value="UniProtKB-SubCell"/>
</dbReference>
<dbReference type="GO" id="GO:0070038">
    <property type="term" value="F:rRNA (pseudouridine-N3-)-methyltransferase activity"/>
    <property type="evidence" value="ECO:0007669"/>
    <property type="project" value="UniProtKB-UniRule"/>
</dbReference>
<dbReference type="CDD" id="cd18081">
    <property type="entry name" value="RlmH-like"/>
    <property type="match status" value="1"/>
</dbReference>
<dbReference type="Gene3D" id="3.40.1280.10">
    <property type="match status" value="1"/>
</dbReference>
<dbReference type="HAMAP" id="MF_00658">
    <property type="entry name" value="23SrRNA_methyltr_H"/>
    <property type="match status" value="1"/>
</dbReference>
<dbReference type="InterPro" id="IPR029028">
    <property type="entry name" value="Alpha/beta_knot_MTases"/>
</dbReference>
<dbReference type="InterPro" id="IPR003742">
    <property type="entry name" value="RlmH-like"/>
</dbReference>
<dbReference type="InterPro" id="IPR029026">
    <property type="entry name" value="tRNA_m1G_MTases_N"/>
</dbReference>
<dbReference type="NCBIfam" id="NF000986">
    <property type="entry name" value="PRK00103.1-4"/>
    <property type="match status" value="1"/>
</dbReference>
<dbReference type="NCBIfam" id="TIGR00246">
    <property type="entry name" value="tRNA_RlmH_YbeA"/>
    <property type="match status" value="1"/>
</dbReference>
<dbReference type="PANTHER" id="PTHR33603">
    <property type="entry name" value="METHYLTRANSFERASE"/>
    <property type="match status" value="1"/>
</dbReference>
<dbReference type="PANTHER" id="PTHR33603:SF1">
    <property type="entry name" value="RIBOSOMAL RNA LARGE SUBUNIT METHYLTRANSFERASE H"/>
    <property type="match status" value="1"/>
</dbReference>
<dbReference type="Pfam" id="PF02590">
    <property type="entry name" value="SPOUT_MTase"/>
    <property type="match status" value="1"/>
</dbReference>
<dbReference type="PIRSF" id="PIRSF004505">
    <property type="entry name" value="MT_bac"/>
    <property type="match status" value="1"/>
</dbReference>
<dbReference type="SUPFAM" id="SSF75217">
    <property type="entry name" value="alpha/beta knot"/>
    <property type="match status" value="1"/>
</dbReference>
<comment type="function">
    <text evidence="1">Specifically methylates the pseudouridine at position 1915 (m3Psi1915) in 23S rRNA.</text>
</comment>
<comment type="catalytic activity">
    <reaction evidence="1">
        <text>pseudouridine(1915) in 23S rRNA + S-adenosyl-L-methionine = N(3)-methylpseudouridine(1915) in 23S rRNA + S-adenosyl-L-homocysteine + H(+)</text>
        <dbReference type="Rhea" id="RHEA:42752"/>
        <dbReference type="Rhea" id="RHEA-COMP:10221"/>
        <dbReference type="Rhea" id="RHEA-COMP:10222"/>
        <dbReference type="ChEBI" id="CHEBI:15378"/>
        <dbReference type="ChEBI" id="CHEBI:57856"/>
        <dbReference type="ChEBI" id="CHEBI:59789"/>
        <dbReference type="ChEBI" id="CHEBI:65314"/>
        <dbReference type="ChEBI" id="CHEBI:74486"/>
        <dbReference type="EC" id="2.1.1.177"/>
    </reaction>
</comment>
<comment type="subunit">
    <text evidence="1">Homodimer.</text>
</comment>
<comment type="subcellular location">
    <subcellularLocation>
        <location evidence="1">Cytoplasm</location>
    </subcellularLocation>
</comment>
<comment type="similarity">
    <text evidence="1">Belongs to the RNA methyltransferase RlmH family.</text>
</comment>
<proteinExistence type="inferred from homology"/>